<sequence length="362" mass="39981">MECSTAIYSLANALGPLKLDSTAPNNSHRTIKAENYFNEDEEDYNENSHEDSEDSKEDSDGQGCRSRKRKEKPPFSYIALIAMAISKRPDKKATLAEIYSYLQENFEFFRGEYAGWRNSIRHNLSLNECFVKLPKDTGESYRGRKGHKWTISDSCEFMLEENGFRRRPRGYKARKRTHFPGVTASNEMGIGGATFDYPSSTTELTDSGTSSLNTDVKNILLNGGEDFGPSISDQLVSSTTSAVLPSLNGPDQSPIYPNYFGYGTAEFPMQWASPTYDWPYYATPHIGLCSSDFPGISPSPTVTPQVSPYFYPPAITTASSFMDDWRFGVSSAAVGAYDSSASFLAAETTAGDVAIPQDLSDC</sequence>
<name>FOXF_CAEEL</name>
<comment type="function">
    <text evidence="3">Transcription factor that is required for cell fate of coelomocytes which are non-muscle mesodermal cells (PubMed:20335356). Acts in concert with, and by activating expression of, the homeodomain gene ceh-34 (PubMed:20335356). Binds to the sequence motif 5'-ATAAA[T/C]A-3' (PubMed:20335356).</text>
</comment>
<comment type="subcellular location">
    <subcellularLocation>
        <location evidence="1 3">Nucleus</location>
    </subcellularLocation>
</comment>
<comment type="developmental stage">
    <text evidence="3">Expression begins during embryogenesis and persists in a small number of cells throughout larval development (at protein level) (PubMed:20335356). Expressed transiently in the postembryonic non-gonadal mesoderm (M lineage), first detected in M.dlp and M.drp as they begin to divide (PubMed:20335356).</text>
</comment>
<comment type="disruption phenotype">
    <text evidence="3">Embryonic lethality; those few animals that survive to adulthood lack functional embryonic and M lineage (mesoblast-cell) derived coelomocytes (CCs) (PubMed:20335356). RNAi-mediated knockdown abolishes expression of ceh-34 in the M lineage (PubMed:20335356).</text>
</comment>
<proteinExistence type="evidence at protein level"/>
<evidence type="ECO:0000255" key="1">
    <source>
        <dbReference type="PROSITE-ProRule" id="PRU00089"/>
    </source>
</evidence>
<evidence type="ECO:0000256" key="2">
    <source>
        <dbReference type="SAM" id="MobiDB-lite"/>
    </source>
</evidence>
<evidence type="ECO:0000269" key="3">
    <source>
    </source>
</evidence>
<evidence type="ECO:0000303" key="4">
    <source>
    </source>
</evidence>
<evidence type="ECO:0000305" key="5"/>
<evidence type="ECO:0000312" key="6">
    <source>
        <dbReference type="Proteomes" id="UP000001940"/>
    </source>
</evidence>
<evidence type="ECO:0000312" key="7">
    <source>
        <dbReference type="WormBase" id="F26B1.7"/>
    </source>
</evidence>
<dbReference type="EMBL" id="BX284601">
    <property type="protein sequence ID" value="CCD64199.1"/>
    <property type="molecule type" value="Genomic_DNA"/>
</dbReference>
<dbReference type="PIR" id="T30169">
    <property type="entry name" value="T30169"/>
</dbReference>
<dbReference type="RefSeq" id="NP_491826.1">
    <property type="nucleotide sequence ID" value="NM_059425.4"/>
</dbReference>
<dbReference type="SMR" id="P91278"/>
<dbReference type="FunCoup" id="P91278">
    <property type="interactions" value="142"/>
</dbReference>
<dbReference type="STRING" id="6239.F26B1.7.1"/>
<dbReference type="PaxDb" id="6239-F26B1.7"/>
<dbReference type="EnsemblMetazoa" id="F26B1.7.1">
    <property type="protein sequence ID" value="F26B1.7.1"/>
    <property type="gene ID" value="WBGene00002601"/>
</dbReference>
<dbReference type="GeneID" id="172331"/>
<dbReference type="KEGG" id="cel:CELE_F26B1.7"/>
<dbReference type="UCSC" id="F26B1.7">
    <property type="organism name" value="c. elegans"/>
</dbReference>
<dbReference type="AGR" id="WB:WBGene00002601"/>
<dbReference type="CTD" id="172331"/>
<dbReference type="WormBase" id="F26B1.7">
    <property type="protein sequence ID" value="CE28006"/>
    <property type="gene ID" value="WBGene00002601"/>
    <property type="gene designation" value="let-381"/>
</dbReference>
<dbReference type="eggNOG" id="KOG2294">
    <property type="taxonomic scope" value="Eukaryota"/>
</dbReference>
<dbReference type="GeneTree" id="ENSGT00940000173807"/>
<dbReference type="HOGENOM" id="CLU_785810_0_0_1"/>
<dbReference type="InParanoid" id="P91278"/>
<dbReference type="OMA" id="FMDDWRF"/>
<dbReference type="OrthoDB" id="5402974at2759"/>
<dbReference type="PhylomeDB" id="P91278"/>
<dbReference type="Reactome" id="R-CEL-3232118">
    <property type="pathway name" value="SUMOylation of transcription factors"/>
</dbReference>
<dbReference type="PRO" id="PR:P91278"/>
<dbReference type="Proteomes" id="UP000001940">
    <property type="component" value="Chromosome I"/>
</dbReference>
<dbReference type="Bgee" id="WBGene00002601">
    <property type="expression patterns" value="Expressed in pharyngeal muscle cell (C elegans) and 3 other cell types or tissues"/>
</dbReference>
<dbReference type="GO" id="GO:0005634">
    <property type="term" value="C:nucleus"/>
    <property type="evidence" value="ECO:0000314"/>
    <property type="project" value="WormBase"/>
</dbReference>
<dbReference type="GO" id="GO:0000981">
    <property type="term" value="F:DNA-binding transcription factor activity, RNA polymerase II-specific"/>
    <property type="evidence" value="ECO:0000318"/>
    <property type="project" value="GO_Central"/>
</dbReference>
<dbReference type="GO" id="GO:0000978">
    <property type="term" value="F:RNA polymerase II cis-regulatory region sequence-specific DNA binding"/>
    <property type="evidence" value="ECO:0000318"/>
    <property type="project" value="GO_Central"/>
</dbReference>
<dbReference type="GO" id="GO:0043565">
    <property type="term" value="F:sequence-specific DNA binding"/>
    <property type="evidence" value="ECO:0000314"/>
    <property type="project" value="WormBase"/>
</dbReference>
<dbReference type="GO" id="GO:0009653">
    <property type="term" value="P:anatomical structure morphogenesis"/>
    <property type="evidence" value="ECO:0000318"/>
    <property type="project" value="GO_Central"/>
</dbReference>
<dbReference type="GO" id="GO:0030154">
    <property type="term" value="P:cell differentiation"/>
    <property type="evidence" value="ECO:0000318"/>
    <property type="project" value="GO_Central"/>
</dbReference>
<dbReference type="GO" id="GO:0007501">
    <property type="term" value="P:mesodermal cell fate specification"/>
    <property type="evidence" value="ECO:0000315"/>
    <property type="project" value="WormBase"/>
</dbReference>
<dbReference type="GO" id="GO:0002119">
    <property type="term" value="P:nematode larval development"/>
    <property type="evidence" value="ECO:0000315"/>
    <property type="project" value="UniProtKB"/>
</dbReference>
<dbReference type="GO" id="GO:0048337">
    <property type="term" value="P:positive regulation of mesodermal cell fate specification"/>
    <property type="evidence" value="ECO:0000316"/>
    <property type="project" value="UniProtKB"/>
</dbReference>
<dbReference type="GO" id="GO:0006357">
    <property type="term" value="P:regulation of transcription by RNA polymerase II"/>
    <property type="evidence" value="ECO:0000318"/>
    <property type="project" value="GO_Central"/>
</dbReference>
<dbReference type="CDD" id="cd20020">
    <property type="entry name" value="FH_FOXF"/>
    <property type="match status" value="1"/>
</dbReference>
<dbReference type="FunFam" id="1.10.10.10:FF:000071">
    <property type="entry name" value="Forkhead box F1"/>
    <property type="match status" value="1"/>
</dbReference>
<dbReference type="Gene3D" id="1.10.10.10">
    <property type="entry name" value="Winged helix-like DNA-binding domain superfamily/Winged helix DNA-binding domain"/>
    <property type="match status" value="1"/>
</dbReference>
<dbReference type="InterPro" id="IPR001766">
    <property type="entry name" value="Fork_head_dom"/>
</dbReference>
<dbReference type="InterPro" id="IPR051770">
    <property type="entry name" value="Forkhead_box_regulator"/>
</dbReference>
<dbReference type="InterPro" id="IPR018122">
    <property type="entry name" value="TF_fork_head_CS_1"/>
</dbReference>
<dbReference type="InterPro" id="IPR030456">
    <property type="entry name" value="TF_fork_head_CS_2"/>
</dbReference>
<dbReference type="InterPro" id="IPR036388">
    <property type="entry name" value="WH-like_DNA-bd_sf"/>
</dbReference>
<dbReference type="InterPro" id="IPR036390">
    <property type="entry name" value="WH_DNA-bd_sf"/>
</dbReference>
<dbReference type="PANTHER" id="PTHR46262">
    <property type="entry name" value="FORKHEAD BOX PROTEIN BINIOU"/>
    <property type="match status" value="1"/>
</dbReference>
<dbReference type="PANTHER" id="PTHR46262:SF2">
    <property type="entry name" value="FORKHEAD BOX PROTEIN BINIOU"/>
    <property type="match status" value="1"/>
</dbReference>
<dbReference type="Pfam" id="PF00250">
    <property type="entry name" value="Forkhead"/>
    <property type="match status" value="1"/>
</dbReference>
<dbReference type="PRINTS" id="PR00053">
    <property type="entry name" value="FORKHEAD"/>
</dbReference>
<dbReference type="SMART" id="SM00339">
    <property type="entry name" value="FH"/>
    <property type="match status" value="1"/>
</dbReference>
<dbReference type="SUPFAM" id="SSF46785">
    <property type="entry name" value="Winged helix' DNA-binding domain"/>
    <property type="match status" value="1"/>
</dbReference>
<dbReference type="PROSITE" id="PS00657">
    <property type="entry name" value="FORK_HEAD_1"/>
    <property type="match status" value="1"/>
</dbReference>
<dbReference type="PROSITE" id="PS00658">
    <property type="entry name" value="FORK_HEAD_2"/>
    <property type="match status" value="1"/>
</dbReference>
<dbReference type="PROSITE" id="PS50039">
    <property type="entry name" value="FORK_HEAD_3"/>
    <property type="match status" value="1"/>
</dbReference>
<gene>
    <name evidence="7" type="primary">let-381</name>
    <name evidence="7" type="ORF">F26B1.7</name>
</gene>
<feature type="chain" id="PRO_0000451992" description="Forkhead box protein F">
    <location>
        <begin position="1"/>
        <end position="362"/>
    </location>
</feature>
<feature type="DNA-binding region" description="Fork-head" evidence="1">
    <location>
        <begin position="72"/>
        <end position="169"/>
    </location>
</feature>
<feature type="region of interest" description="Disordered" evidence="2">
    <location>
        <begin position="19"/>
        <end position="70"/>
    </location>
</feature>
<feature type="compositionally biased region" description="Acidic residues" evidence="2">
    <location>
        <begin position="37"/>
        <end position="57"/>
    </location>
</feature>
<reference evidence="6" key="1">
    <citation type="journal article" date="1998" name="Science">
        <title>Genome sequence of the nematode C. elegans: a platform for investigating biology.</title>
        <authorList>
            <consortium name="The C. elegans sequencing consortium"/>
        </authorList>
    </citation>
    <scope>NUCLEOTIDE SEQUENCE [LARGE SCALE GENOMIC DNA]</scope>
    <source>
        <strain evidence="6">Bristol N2</strain>
    </source>
</reference>
<reference evidence="5" key="2">
    <citation type="journal article" date="2010" name="Development">
        <title>The FoxF/FoxC factor LET-381 directly regulates both cell fate specification and cell differentiation in C. elegans mesoderm development.</title>
        <authorList>
            <person name="Amin N.M."/>
            <person name="Shi H."/>
            <person name="Liu J."/>
        </authorList>
    </citation>
    <scope>FUNCTION</scope>
    <scope>SUBCELLULAR LOCATION</scope>
    <scope>DEVELOPMENTAL STAGE</scope>
    <scope>DISRUPTION PHENOTYPE</scope>
</reference>
<protein>
    <recommendedName>
        <fullName evidence="5">Forkhead box protein F</fullName>
    </recommendedName>
    <alternativeName>
        <fullName evidence="4">FOXF homolog</fullName>
    </alternativeName>
</protein>
<accession>P91278</accession>
<keyword id="KW-0010">Activator</keyword>
<keyword id="KW-0217">Developmental protein</keyword>
<keyword id="KW-0238">DNA-binding</keyword>
<keyword id="KW-0539">Nucleus</keyword>
<keyword id="KW-1185">Reference proteome</keyword>
<keyword id="KW-0804">Transcription</keyword>
<keyword id="KW-0805">Transcription regulation</keyword>
<organism evidence="6">
    <name type="scientific">Caenorhabditis elegans</name>
    <dbReference type="NCBI Taxonomy" id="6239"/>
    <lineage>
        <taxon>Eukaryota</taxon>
        <taxon>Metazoa</taxon>
        <taxon>Ecdysozoa</taxon>
        <taxon>Nematoda</taxon>
        <taxon>Chromadorea</taxon>
        <taxon>Rhabditida</taxon>
        <taxon>Rhabditina</taxon>
        <taxon>Rhabditomorpha</taxon>
        <taxon>Rhabditoidea</taxon>
        <taxon>Rhabditidae</taxon>
        <taxon>Peloderinae</taxon>
        <taxon>Caenorhabditis</taxon>
    </lineage>
</organism>